<reference key="1">
    <citation type="journal article" date="2008" name="PLoS ONE">
        <title>Environmental adaptation: genomic analysis of the piezotolerant and psychrotolerant deep-sea iron reducing bacterium Shewanella piezotolerans WP3.</title>
        <authorList>
            <person name="Wang F."/>
            <person name="Wang J."/>
            <person name="Jian H."/>
            <person name="Zhang B."/>
            <person name="Li S."/>
            <person name="Wang F."/>
            <person name="Zeng X."/>
            <person name="Gao L."/>
            <person name="Bartlett D.H."/>
            <person name="Yu J."/>
            <person name="Hu S."/>
            <person name="Xiao X."/>
        </authorList>
    </citation>
    <scope>NUCLEOTIDE SEQUENCE [LARGE SCALE GENOMIC DNA]</scope>
    <source>
        <strain>WP3 / JCM 13877</strain>
    </source>
</reference>
<protein>
    <recommendedName>
        <fullName evidence="1">Protein SlyX homolog</fullName>
    </recommendedName>
</protein>
<dbReference type="EMBL" id="CP000472">
    <property type="protein sequence ID" value="ACJ27684.1"/>
    <property type="molecule type" value="Genomic_DNA"/>
</dbReference>
<dbReference type="RefSeq" id="WP_020911063.1">
    <property type="nucleotide sequence ID" value="NC_011566.1"/>
</dbReference>
<dbReference type="SMR" id="B8CJY1"/>
<dbReference type="STRING" id="225849.swp_0876"/>
<dbReference type="KEGG" id="swp:swp_0876"/>
<dbReference type="eggNOG" id="COG2900">
    <property type="taxonomic scope" value="Bacteria"/>
</dbReference>
<dbReference type="HOGENOM" id="CLU_180796_4_0_6"/>
<dbReference type="OrthoDB" id="5771733at2"/>
<dbReference type="Proteomes" id="UP000000753">
    <property type="component" value="Chromosome"/>
</dbReference>
<dbReference type="Gene3D" id="1.20.5.300">
    <property type="match status" value="1"/>
</dbReference>
<dbReference type="HAMAP" id="MF_00715">
    <property type="entry name" value="SlyX"/>
    <property type="match status" value="1"/>
</dbReference>
<dbReference type="InterPro" id="IPR007236">
    <property type="entry name" value="SlyX"/>
</dbReference>
<dbReference type="PANTHER" id="PTHR36508">
    <property type="entry name" value="PROTEIN SLYX"/>
    <property type="match status" value="1"/>
</dbReference>
<dbReference type="PANTHER" id="PTHR36508:SF1">
    <property type="entry name" value="PROTEIN SLYX"/>
    <property type="match status" value="1"/>
</dbReference>
<dbReference type="Pfam" id="PF04102">
    <property type="entry name" value="SlyX"/>
    <property type="match status" value="1"/>
</dbReference>
<sequence>MDNIEHRVEELEMKLAFQDGTIEELNQQVIKLNDVVALQQEQLRLLLNKLQSVEPSNMASQADETPPPHY</sequence>
<accession>B8CJY1</accession>
<name>SLYX_SHEPW</name>
<feature type="chain" id="PRO_1000195856" description="Protein SlyX homolog">
    <location>
        <begin position="1"/>
        <end position="70"/>
    </location>
</feature>
<proteinExistence type="inferred from homology"/>
<evidence type="ECO:0000255" key="1">
    <source>
        <dbReference type="HAMAP-Rule" id="MF_00715"/>
    </source>
</evidence>
<comment type="similarity">
    <text evidence="1">Belongs to the SlyX family.</text>
</comment>
<gene>
    <name evidence="1" type="primary">slyX</name>
    <name type="ordered locus">swp_0876</name>
</gene>
<organism>
    <name type="scientific">Shewanella piezotolerans (strain WP3 / JCM 13877)</name>
    <dbReference type="NCBI Taxonomy" id="225849"/>
    <lineage>
        <taxon>Bacteria</taxon>
        <taxon>Pseudomonadati</taxon>
        <taxon>Pseudomonadota</taxon>
        <taxon>Gammaproteobacteria</taxon>
        <taxon>Alteromonadales</taxon>
        <taxon>Shewanellaceae</taxon>
        <taxon>Shewanella</taxon>
    </lineage>
</organism>